<dbReference type="EC" id="3.5.4.38" evidence="1"/>
<dbReference type="EMBL" id="AY622577">
    <property type="protein sequence ID" value="AAT44397.1"/>
    <property type="molecule type" value="Genomic_DNA"/>
</dbReference>
<dbReference type="EMBL" id="AY622570">
    <property type="protein sequence ID" value="AAT44397.1"/>
    <property type="status" value="JOINED"/>
    <property type="molecule type" value="Genomic_DNA"/>
</dbReference>
<dbReference type="EMBL" id="AY622571">
    <property type="protein sequence ID" value="AAT44397.1"/>
    <property type="status" value="JOINED"/>
    <property type="molecule type" value="Genomic_DNA"/>
</dbReference>
<dbReference type="EMBL" id="AY622572">
    <property type="protein sequence ID" value="AAT44397.1"/>
    <property type="status" value="JOINED"/>
    <property type="molecule type" value="Genomic_DNA"/>
</dbReference>
<dbReference type="EMBL" id="AY622573">
    <property type="protein sequence ID" value="AAT44397.1"/>
    <property type="status" value="JOINED"/>
    <property type="molecule type" value="Genomic_DNA"/>
</dbReference>
<dbReference type="EMBL" id="AY622574">
    <property type="protein sequence ID" value="AAT44397.1"/>
    <property type="status" value="JOINED"/>
    <property type="molecule type" value="Genomic_DNA"/>
</dbReference>
<dbReference type="EMBL" id="AY622575">
    <property type="protein sequence ID" value="AAT44397.1"/>
    <property type="status" value="JOINED"/>
    <property type="molecule type" value="Genomic_DNA"/>
</dbReference>
<dbReference type="EMBL" id="AY622576">
    <property type="protein sequence ID" value="AAT44397.1"/>
    <property type="status" value="JOINED"/>
    <property type="molecule type" value="Genomic_DNA"/>
</dbReference>
<dbReference type="SMR" id="Q694B8"/>
<dbReference type="GO" id="GO:0005737">
    <property type="term" value="C:cytoplasm"/>
    <property type="evidence" value="ECO:0000250"/>
    <property type="project" value="UniProtKB"/>
</dbReference>
<dbReference type="GO" id="GO:0005634">
    <property type="term" value="C:nucleus"/>
    <property type="evidence" value="ECO:0007669"/>
    <property type="project" value="UniProtKB-SubCell"/>
</dbReference>
<dbReference type="GO" id="GO:0000932">
    <property type="term" value="C:P-body"/>
    <property type="evidence" value="ECO:0000250"/>
    <property type="project" value="UniProtKB"/>
</dbReference>
<dbReference type="GO" id="GO:1990904">
    <property type="term" value="C:ribonucleoprotein complex"/>
    <property type="evidence" value="ECO:0000250"/>
    <property type="project" value="UniProtKB"/>
</dbReference>
<dbReference type="GO" id="GO:0004126">
    <property type="term" value="F:cytidine deaminase activity"/>
    <property type="evidence" value="ECO:0000250"/>
    <property type="project" value="UniProtKB"/>
</dbReference>
<dbReference type="GO" id="GO:0003723">
    <property type="term" value="F:RNA binding"/>
    <property type="evidence" value="ECO:0007669"/>
    <property type="project" value="TreeGrafter"/>
</dbReference>
<dbReference type="GO" id="GO:0008270">
    <property type="term" value="F:zinc ion binding"/>
    <property type="evidence" value="ECO:0007669"/>
    <property type="project" value="InterPro"/>
</dbReference>
<dbReference type="GO" id="GO:0009972">
    <property type="term" value="P:cytidine deamination"/>
    <property type="evidence" value="ECO:0000250"/>
    <property type="project" value="UniProtKB"/>
</dbReference>
<dbReference type="GO" id="GO:0016554">
    <property type="term" value="P:cytidine to uridine editing"/>
    <property type="evidence" value="ECO:0007669"/>
    <property type="project" value="TreeGrafter"/>
</dbReference>
<dbReference type="GO" id="GO:0051607">
    <property type="term" value="P:defense response to virus"/>
    <property type="evidence" value="ECO:0000250"/>
    <property type="project" value="UniProtKB"/>
</dbReference>
<dbReference type="GO" id="GO:0070383">
    <property type="term" value="P:DNA cytosine deamination"/>
    <property type="evidence" value="ECO:0007669"/>
    <property type="project" value="TreeGrafter"/>
</dbReference>
<dbReference type="GO" id="GO:0045087">
    <property type="term" value="P:innate immune response"/>
    <property type="evidence" value="ECO:0007669"/>
    <property type="project" value="UniProtKB-KW"/>
</dbReference>
<dbReference type="GO" id="GO:0045869">
    <property type="term" value="P:negative regulation of single stranded viral RNA replication via double stranded DNA intermediate"/>
    <property type="evidence" value="ECO:0007669"/>
    <property type="project" value="TreeGrafter"/>
</dbReference>
<dbReference type="GO" id="GO:0010526">
    <property type="term" value="P:transposable element silencing"/>
    <property type="evidence" value="ECO:0000250"/>
    <property type="project" value="UniProtKB"/>
</dbReference>
<dbReference type="CDD" id="cd01283">
    <property type="entry name" value="cytidine_deaminase"/>
    <property type="match status" value="1"/>
</dbReference>
<dbReference type="FunFam" id="3.40.140.10:FF:000044">
    <property type="entry name" value="Apolipoprotein B mRNA editing enzyme catalytic subunit 3B"/>
    <property type="match status" value="1"/>
</dbReference>
<dbReference type="FunFam" id="3.40.140.10:FF:000029">
    <property type="entry name" value="DNA dC-&gt;dU-editing enzyme APOBEC-3G"/>
    <property type="match status" value="1"/>
</dbReference>
<dbReference type="Gene3D" id="3.40.140.10">
    <property type="entry name" value="Cytidine Deaminase, domain 2"/>
    <property type="match status" value="2"/>
</dbReference>
<dbReference type="InterPro" id="IPR016192">
    <property type="entry name" value="APOBEC/CMP_deaminase_Zn-bd"/>
</dbReference>
<dbReference type="InterPro" id="IPR050610">
    <property type="entry name" value="APOBEC_Cyt_Deaminase"/>
</dbReference>
<dbReference type="InterPro" id="IPR002125">
    <property type="entry name" value="CMP_dCMP_dom"/>
</dbReference>
<dbReference type="InterPro" id="IPR016193">
    <property type="entry name" value="Cytidine_deaminase-like"/>
</dbReference>
<dbReference type="PANTHER" id="PTHR13857:SF20">
    <property type="entry name" value="DNA DC-DU-EDITING ENZYME APOBEC-3G"/>
    <property type="match status" value="1"/>
</dbReference>
<dbReference type="PANTHER" id="PTHR13857">
    <property type="entry name" value="MRNA EDITING ENZYME"/>
    <property type="match status" value="1"/>
</dbReference>
<dbReference type="Pfam" id="PF18782">
    <property type="entry name" value="NAD2"/>
    <property type="match status" value="2"/>
</dbReference>
<dbReference type="SUPFAM" id="SSF53927">
    <property type="entry name" value="Cytidine deaminase-like"/>
    <property type="match status" value="2"/>
</dbReference>
<dbReference type="PROSITE" id="PS00903">
    <property type="entry name" value="CYT_DCMP_DEAMINASES_1"/>
    <property type="match status" value="2"/>
</dbReference>
<dbReference type="PROSITE" id="PS51747">
    <property type="entry name" value="CYT_DCMP_DEAMINASES_2"/>
    <property type="match status" value="2"/>
</dbReference>
<name>ABC3G_LAGLA</name>
<proteinExistence type="inferred from homology"/>
<organism>
    <name type="scientific">Lagothrix lagotricha</name>
    <name type="common">Brown woolly monkey</name>
    <name type="synonym">Humboldt's woolly monkey</name>
    <dbReference type="NCBI Taxonomy" id="9519"/>
    <lineage>
        <taxon>Eukaryota</taxon>
        <taxon>Metazoa</taxon>
        <taxon>Chordata</taxon>
        <taxon>Craniata</taxon>
        <taxon>Vertebrata</taxon>
        <taxon>Euteleostomi</taxon>
        <taxon>Mammalia</taxon>
        <taxon>Eutheria</taxon>
        <taxon>Euarchontoglires</taxon>
        <taxon>Primates</taxon>
        <taxon>Haplorrhini</taxon>
        <taxon>Platyrrhini</taxon>
        <taxon>Atelidae</taxon>
        <taxon>Atelinae</taxon>
        <taxon>Lagothrix</taxon>
    </lineage>
</organism>
<accession>Q694B8</accession>
<evidence type="ECO:0000250" key="1">
    <source>
        <dbReference type="UniProtKB" id="Q9HC16"/>
    </source>
</evidence>
<evidence type="ECO:0000255" key="2">
    <source>
        <dbReference type="PROSITE-ProRule" id="PRU01083"/>
    </source>
</evidence>
<evidence type="ECO:0000305" key="3"/>
<comment type="function">
    <text evidence="1">DNA deaminase (cytidine deaminase) which acts as an inhibitor of retrovirus replication and retrotransposon mobility. After the penetration of retroviral nucleocapsids into target cells of infection and the initiation of reverse transcription, it can induce the conversion of cytosine to uracil in the minus-sense single-strand viral DNA, leading to G-to-A hypermutations in the subsequent plus-strand viral DNA. The resultant detrimental levels of mutations in the proviral genome, along with a deamination-independent mechanism that works prior to the proviral integration, together exert efficient antiretroviral effects in infected target cells. Selectively targets single-stranded DNA and does not deaminate double-stranded DNA or single- or double-stranded RNA (By similarity).</text>
</comment>
<comment type="catalytic activity">
    <reaction evidence="1">
        <text>a 2'-deoxycytidine in single-stranded DNA + H2O + H(+) = a 2'-deoxyuridine in single-stranded DNA + NH4(+)</text>
        <dbReference type="Rhea" id="RHEA:50948"/>
        <dbReference type="Rhea" id="RHEA-COMP:12846"/>
        <dbReference type="Rhea" id="RHEA-COMP:12847"/>
        <dbReference type="ChEBI" id="CHEBI:15377"/>
        <dbReference type="ChEBI" id="CHEBI:15378"/>
        <dbReference type="ChEBI" id="CHEBI:28938"/>
        <dbReference type="ChEBI" id="CHEBI:85452"/>
        <dbReference type="ChEBI" id="CHEBI:133902"/>
        <dbReference type="EC" id="3.5.4.38"/>
    </reaction>
</comment>
<comment type="cofactor">
    <cofactor evidence="1">
        <name>Zn(2+)</name>
        <dbReference type="ChEBI" id="CHEBI:29105"/>
    </cofactor>
</comment>
<comment type="subunit">
    <text evidence="1">Homodimer. Homooligomer. Can bind RNA to form ribonucleoprotein complexes of high-molecular-mass (HMM) or low-molecular-mass (LMM). HMM is inactive and heterogeneous in protein composition because of binding nonselectively to cellular RNAs, which in turn are associated with variety of cellular proteins. The LMM form which is enzymatically active has few or no RNAs associated. Its ability to form homooligomer is distinct from its ability to assemble into HMM. Interacts with APOBEC3B, APOBEC3F, MOV10, AGO2, EIF4E, EIF4ENIF1, DCP2 and DDX6 in an RNA-dependent manner. Interacts with AGO1, AGO3 and PKA/PRKACA (By similarity).</text>
</comment>
<comment type="subcellular location">
    <subcellularLocation>
        <location evidence="1">Cytoplasm</location>
    </subcellularLocation>
    <subcellularLocation>
        <location evidence="1">Nucleus</location>
    </subcellularLocation>
    <subcellularLocation>
        <location evidence="1">Cytoplasm</location>
        <location evidence="1">P-body</location>
    </subcellularLocation>
    <text evidence="1">Mainly cytoplasmic, small amount are found in the nucleus.</text>
</comment>
<comment type="domain">
    <text evidence="1">The CMP/dCMP deaminase domain 1 mediates RNA binding, RNA-dependent oligomerization and virion incorporation whereas the CMP/dCMP deaminase domain 2 confers deoxycytidine deaminase activity and substrate sequence specificity.</text>
</comment>
<comment type="similarity">
    <text evidence="3">Belongs to the cytidine and deoxycytidylate deaminase family.</text>
</comment>
<keyword id="KW-0051">Antiviral defense</keyword>
<keyword id="KW-0963">Cytoplasm</keyword>
<keyword id="KW-0378">Hydrolase</keyword>
<keyword id="KW-0391">Immunity</keyword>
<keyword id="KW-0399">Innate immunity</keyword>
<keyword id="KW-0479">Metal-binding</keyword>
<keyword id="KW-0539">Nucleus</keyword>
<keyword id="KW-0597">Phosphoprotein</keyword>
<keyword id="KW-0677">Repeat</keyword>
<keyword id="KW-0862">Zinc</keyword>
<reference key="1">
    <citation type="journal article" date="2004" name="PLoS Biol.">
        <title>Ancient adaptive evolution of the primate antiviral DNA-editing enzyme APOBEC3G.</title>
        <authorList>
            <person name="Sawyer S.L."/>
            <person name="Emerman M."/>
            <person name="Malik H.S."/>
        </authorList>
    </citation>
    <scope>NUCLEOTIDE SEQUENCE [GENOMIC DNA]</scope>
</reference>
<feature type="chain" id="PRO_0000171762" description="DNA dC-&gt;dU-editing enzyme APOBEC-3G">
    <location>
        <begin position="1"/>
        <end position="381"/>
    </location>
</feature>
<feature type="domain" description="CMP/dCMP-type deaminase 1" evidence="2">
    <location>
        <begin position="29"/>
        <end position="143"/>
    </location>
</feature>
<feature type="domain" description="CMP/dCMP-type deaminase 2" evidence="2">
    <location>
        <begin position="211"/>
        <end position="325"/>
    </location>
</feature>
<feature type="region of interest" description="Essential for cytoplasmic localization" evidence="3">
    <location>
        <begin position="1"/>
        <end position="62"/>
    </location>
</feature>
<feature type="region of interest" description="Necessary for homooligomerization" evidence="3">
    <location>
        <begin position="206"/>
        <end position="333"/>
    </location>
</feature>
<feature type="region of interest" description="Interaction with DNA" evidence="3">
    <location>
        <begin position="210"/>
        <end position="212"/>
    </location>
</feature>
<feature type="region of interest" description="Interaction with DNA" evidence="3">
    <location>
        <begin position="310"/>
        <end position="317"/>
    </location>
</feature>
<feature type="active site" description="Proton donor" evidence="2">
    <location>
        <position position="256"/>
    </location>
</feature>
<feature type="binding site" evidence="1 2">
    <location>
        <position position="67"/>
    </location>
    <ligand>
        <name>Zn(2+)</name>
        <dbReference type="ChEBI" id="CHEBI:29105"/>
        <label>1</label>
    </ligand>
</feature>
<feature type="binding site" evidence="1 2">
    <location>
        <position position="98"/>
    </location>
    <ligand>
        <name>Zn(2+)</name>
        <dbReference type="ChEBI" id="CHEBI:29105"/>
        <label>1</label>
    </ligand>
</feature>
<feature type="binding site" evidence="1 2">
    <location>
        <position position="101"/>
    </location>
    <ligand>
        <name>Zn(2+)</name>
        <dbReference type="ChEBI" id="CHEBI:29105"/>
        <label>1</label>
    </ligand>
</feature>
<feature type="binding site" evidence="1">
    <location>
        <position position="254"/>
    </location>
    <ligand>
        <name>Zn(2+)</name>
        <dbReference type="ChEBI" id="CHEBI:29105"/>
        <label>2</label>
        <note>catalytic</note>
    </ligand>
</feature>
<feature type="binding site" evidence="1">
    <location>
        <position position="285"/>
    </location>
    <ligand>
        <name>Zn(2+)</name>
        <dbReference type="ChEBI" id="CHEBI:29105"/>
        <label>2</label>
        <note>catalytic</note>
    </ligand>
</feature>
<feature type="binding site" evidence="1">
    <location>
        <position position="288"/>
    </location>
    <ligand>
        <name>Zn(2+)</name>
        <dbReference type="ChEBI" id="CHEBI:29105"/>
        <label>2</label>
        <note>catalytic</note>
    </ligand>
</feature>
<feature type="site" description="Interaction with DNA" evidence="3">
    <location>
        <position position="241"/>
    </location>
</feature>
<feature type="modified residue" description="Phosphothreonine; by PKA" evidence="1">
    <location>
        <position position="32"/>
    </location>
</feature>
<gene>
    <name type="primary">APOBEC3G</name>
</gene>
<sequence>MKPQTRNTVVRMDPDTFFYNFYNRPILSHRNTVWLCYEVKMKTNDPSRPPLVANIFQGQVSFNPEHHAEMYFLSWFRGNLLPACKRSQITWFVSWNPCLYCVAKVAEFLAEHPKVTLTVSTARLYCYRKKDWRRALRKLSQTGARVKIMDYEEFQHCWDNFVDNQREPFEPWNALPKHYTLLRITLGEVLRHRMDPVTFTYNFTNDPSVLGQHQSYLCYKVEHLRNGTWVPLHQHRGFILNEASNSVSFPEGRHAELCLLDLISFWKLKQAQRYRVTCFISWSPCFSCAEKVAEFLQENPHVNLHISAARIYDYQRGYKKGLRRLDRAGTPISMMKYSEFKHCWDTFVDHQGHPFQPWEELNEHSQALSGRLQAILQNQGN</sequence>
<protein>
    <recommendedName>
        <fullName evidence="1">DNA dC-&gt;dU-editing enzyme APOBEC-3G</fullName>
        <ecNumber evidence="1">3.5.4.38</ecNumber>
    </recommendedName>
    <alternativeName>
        <fullName>Deoxycytidine deaminase</fullName>
    </alternativeName>
</protein>